<gene>
    <name evidence="1" type="primary">recF</name>
    <name type="ordered locus">Fjoh_0214</name>
</gene>
<reference key="1">
    <citation type="journal article" date="2009" name="Appl. Environ. Microbiol.">
        <title>Novel features of the polysaccharide-digesting gliding bacterium Flavobacterium johnsoniae as revealed by genome sequence analysis.</title>
        <authorList>
            <person name="McBride M.J."/>
            <person name="Xie G."/>
            <person name="Martens E.C."/>
            <person name="Lapidus A."/>
            <person name="Henrissat B."/>
            <person name="Rhodes R.G."/>
            <person name="Goltsman E."/>
            <person name="Wang W."/>
            <person name="Xu J."/>
            <person name="Hunnicutt D.W."/>
            <person name="Staroscik A.M."/>
            <person name="Hoover T.R."/>
            <person name="Cheng Y.Q."/>
            <person name="Stein J.L."/>
        </authorList>
    </citation>
    <scope>NUCLEOTIDE SEQUENCE [LARGE SCALE GENOMIC DNA]</scope>
    <source>
        <strain>ATCC 17061 / DSM 2064 / JCM 8514 / BCRC 14874 / CCUG 350202 / NBRC 14942 / NCIMB 11054 / UW101</strain>
    </source>
</reference>
<accession>A5FNH5</accession>
<evidence type="ECO:0000255" key="1">
    <source>
        <dbReference type="HAMAP-Rule" id="MF_00365"/>
    </source>
</evidence>
<dbReference type="EMBL" id="CP000685">
    <property type="protein sequence ID" value="ABQ03251.1"/>
    <property type="molecule type" value="Genomic_DNA"/>
</dbReference>
<dbReference type="RefSeq" id="WP_012022322.1">
    <property type="nucleotide sequence ID" value="NC_009441.1"/>
</dbReference>
<dbReference type="SMR" id="A5FNH5"/>
<dbReference type="STRING" id="376686.Fjoh_0214"/>
<dbReference type="KEGG" id="fjo:Fjoh_0214"/>
<dbReference type="eggNOG" id="COG1195">
    <property type="taxonomic scope" value="Bacteria"/>
</dbReference>
<dbReference type="HOGENOM" id="CLU_040267_0_1_10"/>
<dbReference type="OrthoDB" id="9803889at2"/>
<dbReference type="Proteomes" id="UP000006694">
    <property type="component" value="Chromosome"/>
</dbReference>
<dbReference type="GO" id="GO:0005737">
    <property type="term" value="C:cytoplasm"/>
    <property type="evidence" value="ECO:0007669"/>
    <property type="project" value="UniProtKB-SubCell"/>
</dbReference>
<dbReference type="GO" id="GO:0005524">
    <property type="term" value="F:ATP binding"/>
    <property type="evidence" value="ECO:0007669"/>
    <property type="project" value="UniProtKB-UniRule"/>
</dbReference>
<dbReference type="GO" id="GO:0003697">
    <property type="term" value="F:single-stranded DNA binding"/>
    <property type="evidence" value="ECO:0007669"/>
    <property type="project" value="UniProtKB-UniRule"/>
</dbReference>
<dbReference type="GO" id="GO:0006260">
    <property type="term" value="P:DNA replication"/>
    <property type="evidence" value="ECO:0007669"/>
    <property type="project" value="UniProtKB-UniRule"/>
</dbReference>
<dbReference type="GO" id="GO:0000731">
    <property type="term" value="P:DNA synthesis involved in DNA repair"/>
    <property type="evidence" value="ECO:0007669"/>
    <property type="project" value="TreeGrafter"/>
</dbReference>
<dbReference type="GO" id="GO:0006302">
    <property type="term" value="P:double-strand break repair"/>
    <property type="evidence" value="ECO:0007669"/>
    <property type="project" value="TreeGrafter"/>
</dbReference>
<dbReference type="GO" id="GO:0009432">
    <property type="term" value="P:SOS response"/>
    <property type="evidence" value="ECO:0007669"/>
    <property type="project" value="UniProtKB-UniRule"/>
</dbReference>
<dbReference type="Gene3D" id="3.40.50.300">
    <property type="entry name" value="P-loop containing nucleotide triphosphate hydrolases"/>
    <property type="match status" value="1"/>
</dbReference>
<dbReference type="Gene3D" id="1.20.1050.90">
    <property type="entry name" value="RecF/RecN/SMC, N-terminal domain"/>
    <property type="match status" value="1"/>
</dbReference>
<dbReference type="HAMAP" id="MF_00365">
    <property type="entry name" value="RecF"/>
    <property type="match status" value="1"/>
</dbReference>
<dbReference type="InterPro" id="IPR001238">
    <property type="entry name" value="DNA-binding_RecF"/>
</dbReference>
<dbReference type="InterPro" id="IPR018078">
    <property type="entry name" value="DNA-binding_RecF_CS"/>
</dbReference>
<dbReference type="InterPro" id="IPR027417">
    <property type="entry name" value="P-loop_NTPase"/>
</dbReference>
<dbReference type="InterPro" id="IPR003395">
    <property type="entry name" value="RecF/RecN/SMC_N"/>
</dbReference>
<dbReference type="InterPro" id="IPR042174">
    <property type="entry name" value="RecF_2"/>
</dbReference>
<dbReference type="NCBIfam" id="TIGR00611">
    <property type="entry name" value="recf"/>
    <property type="match status" value="1"/>
</dbReference>
<dbReference type="PANTHER" id="PTHR32182">
    <property type="entry name" value="DNA REPLICATION AND REPAIR PROTEIN RECF"/>
    <property type="match status" value="1"/>
</dbReference>
<dbReference type="PANTHER" id="PTHR32182:SF0">
    <property type="entry name" value="DNA REPLICATION AND REPAIR PROTEIN RECF"/>
    <property type="match status" value="1"/>
</dbReference>
<dbReference type="Pfam" id="PF02463">
    <property type="entry name" value="SMC_N"/>
    <property type="match status" value="1"/>
</dbReference>
<dbReference type="SUPFAM" id="SSF52540">
    <property type="entry name" value="P-loop containing nucleoside triphosphate hydrolases"/>
    <property type="match status" value="1"/>
</dbReference>
<dbReference type="PROSITE" id="PS00617">
    <property type="entry name" value="RECF_1"/>
    <property type="match status" value="1"/>
</dbReference>
<keyword id="KW-0067">ATP-binding</keyword>
<keyword id="KW-0963">Cytoplasm</keyword>
<keyword id="KW-0227">DNA damage</keyword>
<keyword id="KW-0234">DNA repair</keyword>
<keyword id="KW-0235">DNA replication</keyword>
<keyword id="KW-0238">DNA-binding</keyword>
<keyword id="KW-0547">Nucleotide-binding</keyword>
<keyword id="KW-0742">SOS response</keyword>
<feature type="chain" id="PRO_1000079587" description="DNA replication and repair protein RecF">
    <location>
        <begin position="1"/>
        <end position="359"/>
    </location>
</feature>
<feature type="binding site" evidence="1">
    <location>
        <begin position="30"/>
        <end position="37"/>
    </location>
    <ligand>
        <name>ATP</name>
        <dbReference type="ChEBI" id="CHEBI:30616"/>
    </ligand>
</feature>
<comment type="function">
    <text evidence="1">The RecF protein is involved in DNA metabolism; it is required for DNA replication and normal SOS inducibility. RecF binds preferentially to single-stranded, linear DNA. It also seems to bind ATP.</text>
</comment>
<comment type="subcellular location">
    <subcellularLocation>
        <location evidence="1">Cytoplasm</location>
    </subcellularLocation>
</comment>
<comment type="similarity">
    <text evidence="1">Belongs to the RecF family.</text>
</comment>
<protein>
    <recommendedName>
        <fullName evidence="1">DNA replication and repair protein RecF</fullName>
    </recommendedName>
</protein>
<organism>
    <name type="scientific">Flavobacterium johnsoniae (strain ATCC 17061 / DSM 2064 / JCM 8514 / BCRC 14874 / CCUG 350202 / NBRC 14942 / NCIMB 11054 / UW101)</name>
    <name type="common">Cytophaga johnsonae</name>
    <dbReference type="NCBI Taxonomy" id="376686"/>
    <lineage>
        <taxon>Bacteria</taxon>
        <taxon>Pseudomonadati</taxon>
        <taxon>Bacteroidota</taxon>
        <taxon>Flavobacteriia</taxon>
        <taxon>Flavobacteriales</taxon>
        <taxon>Flavobacteriaceae</taxon>
        <taxon>Flavobacterium</taxon>
    </lineage>
</organism>
<sequence length="359" mass="41520">MHLNKLSLFNYKNFSEAGFDFDIKINCFVGKNGIGKTNVLDAIYHLAYGKSYFNPLAVQNIKHGEEFFVIDAELEKNDRTEQIVCSLKKGQKKVLKRNGKAYDKFSDHIGFIPLVIISPADRDLIVEGSETRRKFMDSVISQLDSTYLHQLIQYQKVIVQRNALLKYFALNHTFDNDTLSIYNEQLNEFGKSIFEKRKEFLEEFIPIFNVHHQAITGSEESVQLVYESHLFEKDLLTLLQENINKDRALHYTSSGIHKDDLSFEIDSHPIKKFGSQGQQKSFLIALKLAQFEFLKKQSGVKPILLFDDIFDKLDETRVAKIVEMVNSETFGQLFISDTHPERTEAIVKSTHQTYKIFNL</sequence>
<name>RECF_FLAJ1</name>
<proteinExistence type="inferred from homology"/>